<sequence>MAAALVSVPRIKLGSQGLEVSAQGLGCMGMSAFYGPPKPESEMIKLIHHAVDAGVTFLDTSDVYGPHTNEVLLGKALQGGVREKVELATKFGVSFADGKREIHGDPAYVRTACEGSFKRLGVDCIDLYYQHRIDKRVPIEVTIGELKKLVEEGKIKYIGLSEASASTIRRAHAVHPITAVQLEWSLWSRDAEEDIIPTCRELGIGIVAYSPLGRGFFSSGAKLVDSLSEQDFRKHMPRFQPENLDKNAQIFERVRRDGSTERMHAITARVGLGSPPRKRRLPHTWHNKNRQLQPERGGTVCEAYTG</sequence>
<keyword id="KW-0521">NADP</keyword>
<keyword id="KW-0560">Oxidoreductase</keyword>
<keyword id="KW-1185">Reference proteome</keyword>
<name>IN22_MAIZE</name>
<organism>
    <name type="scientific">Zea mays</name>
    <name type="common">Maize</name>
    <dbReference type="NCBI Taxonomy" id="4577"/>
    <lineage>
        <taxon>Eukaryota</taxon>
        <taxon>Viridiplantae</taxon>
        <taxon>Streptophyta</taxon>
        <taxon>Embryophyta</taxon>
        <taxon>Tracheophyta</taxon>
        <taxon>Spermatophyta</taxon>
        <taxon>Magnoliopsida</taxon>
        <taxon>Liliopsida</taxon>
        <taxon>Poales</taxon>
        <taxon>Poaceae</taxon>
        <taxon>PACMAD clade</taxon>
        <taxon>Panicoideae</taxon>
        <taxon>Andropogonodae</taxon>
        <taxon>Andropogoneae</taxon>
        <taxon>Tripsacinae</taxon>
        <taxon>Zea</taxon>
    </lineage>
</organism>
<feature type="chain" id="PRO_0000070381" description="IN2-2 protein">
    <location>
        <begin position="1"/>
        <end position="306"/>
    </location>
</feature>
<feature type="region of interest" description="Disordered" evidence="2">
    <location>
        <begin position="272"/>
        <end position="306"/>
    </location>
</feature>
<feature type="compositionally biased region" description="Basic residues" evidence="2">
    <location>
        <begin position="276"/>
        <end position="289"/>
    </location>
</feature>
<feature type="active site" description="Proton donor" evidence="1">
    <location>
        <position position="64"/>
    </location>
</feature>
<feature type="binding site" evidence="1">
    <location>
        <position position="131"/>
    </location>
    <ligand>
        <name>substrate</name>
    </ligand>
</feature>
<feature type="binding site" evidence="1">
    <location>
        <begin position="210"/>
        <end position="220"/>
    </location>
    <ligand>
        <name>NADP(+)</name>
        <dbReference type="ChEBI" id="CHEBI:58349"/>
    </ligand>
</feature>
<feature type="site" description="Lowers pKa of active site Tyr" evidence="1">
    <location>
        <position position="90"/>
    </location>
</feature>
<gene>
    <name type="primary">IN2-2</name>
    <name type="synonym">SAF2</name>
</gene>
<comment type="tissue specificity">
    <text>Leaves and roots.</text>
</comment>
<comment type="developmental stage">
    <text>It appears in roots within 30 minutes of induction, maximum levels are reached by 6 hours, and remains constant for 2 days. In leaves it is seen 9 hours after induction, and reaches maximum levels after 24 hours.</text>
</comment>
<comment type="induction">
    <text>By N-(aminocarbonyl)-2-chlorobenzenesulfonamide (2-CBSU).</text>
</comment>
<comment type="similarity">
    <text evidence="3">Belongs to the aldo/keto reductase family. Aldo/keto reductase 2 subfamily.</text>
</comment>
<accession>P49249</accession>
<dbReference type="SMR" id="P49249"/>
<dbReference type="STRING" id="4577.P49249"/>
<dbReference type="MaizeGDB" id="121988"/>
<dbReference type="eggNOG" id="KOG1575">
    <property type="taxonomic scope" value="Eukaryota"/>
</dbReference>
<dbReference type="InParanoid" id="P49249"/>
<dbReference type="Proteomes" id="UP000007305">
    <property type="component" value="Unplaced"/>
</dbReference>
<dbReference type="ExpressionAtlas" id="P49249">
    <property type="expression patterns" value="baseline and differential"/>
</dbReference>
<dbReference type="GO" id="GO:0005737">
    <property type="term" value="C:cytoplasm"/>
    <property type="evidence" value="ECO:0000318"/>
    <property type="project" value="GO_Central"/>
</dbReference>
<dbReference type="GO" id="GO:0004033">
    <property type="term" value="F:aldo-keto reductase (NADPH) activity"/>
    <property type="evidence" value="ECO:0000318"/>
    <property type="project" value="GO_Central"/>
</dbReference>
<dbReference type="CDD" id="cd19145">
    <property type="entry name" value="AKR_AKR13D1"/>
    <property type="match status" value="1"/>
</dbReference>
<dbReference type="Gene3D" id="3.20.20.100">
    <property type="entry name" value="NADP-dependent oxidoreductase domain"/>
    <property type="match status" value="1"/>
</dbReference>
<dbReference type="InterPro" id="IPR020471">
    <property type="entry name" value="AKR"/>
</dbReference>
<dbReference type="InterPro" id="IPR050791">
    <property type="entry name" value="Aldo-Keto_reductase"/>
</dbReference>
<dbReference type="InterPro" id="IPR023210">
    <property type="entry name" value="NADP_OxRdtase_dom"/>
</dbReference>
<dbReference type="InterPro" id="IPR036812">
    <property type="entry name" value="NADP_OxRdtase_dom_sf"/>
</dbReference>
<dbReference type="PANTHER" id="PTHR43625">
    <property type="entry name" value="AFLATOXIN B1 ALDEHYDE REDUCTASE"/>
    <property type="match status" value="1"/>
</dbReference>
<dbReference type="PANTHER" id="PTHR43625:SF40">
    <property type="entry name" value="ALDO-KETO REDUCTASE YAKC [NADP(+)]"/>
    <property type="match status" value="1"/>
</dbReference>
<dbReference type="Pfam" id="PF00248">
    <property type="entry name" value="Aldo_ket_red"/>
    <property type="match status" value="1"/>
</dbReference>
<dbReference type="PRINTS" id="PR00069">
    <property type="entry name" value="ALDKETRDTASE"/>
</dbReference>
<dbReference type="SUPFAM" id="SSF51430">
    <property type="entry name" value="NAD(P)-linked oxidoreductase"/>
    <property type="match status" value="1"/>
</dbReference>
<evidence type="ECO:0000250" key="1"/>
<evidence type="ECO:0000256" key="2">
    <source>
        <dbReference type="SAM" id="MobiDB-lite"/>
    </source>
</evidence>
<evidence type="ECO:0000305" key="3"/>
<reference key="1">
    <citation type="journal article" date="1991" name="Plant Mol. Biol.">
        <title>Isolation and characterization of cDNA clones for RNA species induced by substituted benzenesulfonamides in corn.</title>
        <authorList>
            <person name="Hershey H.P."/>
            <person name="Stoner T.D."/>
        </authorList>
    </citation>
    <scope>NUCLEOTIDE SEQUENCE</scope>
    <source>
        <strain>cv. Missouri 17</strain>
    </source>
</reference>
<proteinExistence type="evidence at transcript level"/>
<protein>
    <recommendedName>
        <fullName>IN2-2 protein</fullName>
    </recommendedName>
</protein>